<comment type="function">
    <text evidence="1">Attaches a formyl group to the free amino group of methionyl-tRNA(fMet). The formyl group appears to play a dual role in the initiator identity of N-formylmethionyl-tRNA by promoting its recognition by IF2 and preventing the misappropriation of this tRNA by the elongation apparatus.</text>
</comment>
<comment type="catalytic activity">
    <reaction evidence="1">
        <text>L-methionyl-tRNA(fMet) + (6R)-10-formyltetrahydrofolate = N-formyl-L-methionyl-tRNA(fMet) + (6S)-5,6,7,8-tetrahydrofolate + H(+)</text>
        <dbReference type="Rhea" id="RHEA:24380"/>
        <dbReference type="Rhea" id="RHEA-COMP:9952"/>
        <dbReference type="Rhea" id="RHEA-COMP:9953"/>
        <dbReference type="ChEBI" id="CHEBI:15378"/>
        <dbReference type="ChEBI" id="CHEBI:57453"/>
        <dbReference type="ChEBI" id="CHEBI:78530"/>
        <dbReference type="ChEBI" id="CHEBI:78844"/>
        <dbReference type="ChEBI" id="CHEBI:195366"/>
        <dbReference type="EC" id="2.1.2.9"/>
    </reaction>
</comment>
<comment type="similarity">
    <text evidence="1">Belongs to the Fmt family.</text>
</comment>
<keyword id="KW-0648">Protein biosynthesis</keyword>
<keyword id="KW-1185">Reference proteome</keyword>
<keyword id="KW-0808">Transferase</keyword>
<organism>
    <name type="scientific">Shigella boydii serotype 18 (strain CDC 3083-94 / BS512)</name>
    <dbReference type="NCBI Taxonomy" id="344609"/>
    <lineage>
        <taxon>Bacteria</taxon>
        <taxon>Pseudomonadati</taxon>
        <taxon>Pseudomonadota</taxon>
        <taxon>Gammaproteobacteria</taxon>
        <taxon>Enterobacterales</taxon>
        <taxon>Enterobacteriaceae</taxon>
        <taxon>Shigella</taxon>
    </lineage>
</organism>
<accession>B2U2Q5</accession>
<dbReference type="EC" id="2.1.2.9" evidence="1"/>
<dbReference type="EMBL" id="CP001063">
    <property type="protein sequence ID" value="ACD07008.1"/>
    <property type="molecule type" value="Genomic_DNA"/>
</dbReference>
<dbReference type="RefSeq" id="WP_000004463.1">
    <property type="nucleotide sequence ID" value="NC_010658.1"/>
</dbReference>
<dbReference type="SMR" id="B2U2Q5"/>
<dbReference type="STRING" id="344609.SbBS512_E3672"/>
<dbReference type="KEGG" id="sbc:SbBS512_E3672"/>
<dbReference type="HOGENOM" id="CLU_033347_1_2_6"/>
<dbReference type="Proteomes" id="UP000001030">
    <property type="component" value="Chromosome"/>
</dbReference>
<dbReference type="GO" id="GO:0005829">
    <property type="term" value="C:cytosol"/>
    <property type="evidence" value="ECO:0007669"/>
    <property type="project" value="TreeGrafter"/>
</dbReference>
<dbReference type="GO" id="GO:0004479">
    <property type="term" value="F:methionyl-tRNA formyltransferase activity"/>
    <property type="evidence" value="ECO:0007669"/>
    <property type="project" value="UniProtKB-UniRule"/>
</dbReference>
<dbReference type="CDD" id="cd08646">
    <property type="entry name" value="FMT_core_Met-tRNA-FMT_N"/>
    <property type="match status" value="1"/>
</dbReference>
<dbReference type="CDD" id="cd08704">
    <property type="entry name" value="Met_tRNA_FMT_C"/>
    <property type="match status" value="1"/>
</dbReference>
<dbReference type="FunFam" id="3.10.25.10:FF:000001">
    <property type="entry name" value="Methionyl-tRNA formyltransferase"/>
    <property type="match status" value="1"/>
</dbReference>
<dbReference type="FunFam" id="3.40.50.12230:FF:000001">
    <property type="entry name" value="Methionyl-tRNA formyltransferase"/>
    <property type="match status" value="1"/>
</dbReference>
<dbReference type="FunFam" id="3.40.50.170:FF:000003">
    <property type="entry name" value="Methionyl-tRNA formyltransferase"/>
    <property type="match status" value="1"/>
</dbReference>
<dbReference type="Gene3D" id="3.10.25.10">
    <property type="entry name" value="Formyl transferase, C-terminal domain"/>
    <property type="match status" value="1"/>
</dbReference>
<dbReference type="Gene3D" id="3.40.50.170">
    <property type="entry name" value="Formyl transferase, N-terminal domain"/>
    <property type="match status" value="1"/>
</dbReference>
<dbReference type="HAMAP" id="MF_00182">
    <property type="entry name" value="Formyl_trans"/>
    <property type="match status" value="1"/>
</dbReference>
<dbReference type="InterPro" id="IPR005794">
    <property type="entry name" value="Fmt"/>
</dbReference>
<dbReference type="InterPro" id="IPR005793">
    <property type="entry name" value="Formyl_trans_C"/>
</dbReference>
<dbReference type="InterPro" id="IPR037022">
    <property type="entry name" value="Formyl_trans_C_sf"/>
</dbReference>
<dbReference type="InterPro" id="IPR002376">
    <property type="entry name" value="Formyl_transf_N"/>
</dbReference>
<dbReference type="InterPro" id="IPR036477">
    <property type="entry name" value="Formyl_transf_N_sf"/>
</dbReference>
<dbReference type="InterPro" id="IPR011034">
    <property type="entry name" value="Formyl_transferase-like_C_sf"/>
</dbReference>
<dbReference type="InterPro" id="IPR001555">
    <property type="entry name" value="GART_AS"/>
</dbReference>
<dbReference type="InterPro" id="IPR044135">
    <property type="entry name" value="Met-tRNA-FMT_C"/>
</dbReference>
<dbReference type="InterPro" id="IPR041711">
    <property type="entry name" value="Met-tRNA-FMT_N"/>
</dbReference>
<dbReference type="NCBIfam" id="TIGR00460">
    <property type="entry name" value="fmt"/>
    <property type="match status" value="1"/>
</dbReference>
<dbReference type="PANTHER" id="PTHR11138">
    <property type="entry name" value="METHIONYL-TRNA FORMYLTRANSFERASE"/>
    <property type="match status" value="1"/>
</dbReference>
<dbReference type="PANTHER" id="PTHR11138:SF5">
    <property type="entry name" value="METHIONYL-TRNA FORMYLTRANSFERASE, MITOCHONDRIAL"/>
    <property type="match status" value="1"/>
</dbReference>
<dbReference type="Pfam" id="PF02911">
    <property type="entry name" value="Formyl_trans_C"/>
    <property type="match status" value="1"/>
</dbReference>
<dbReference type="Pfam" id="PF00551">
    <property type="entry name" value="Formyl_trans_N"/>
    <property type="match status" value="1"/>
</dbReference>
<dbReference type="SUPFAM" id="SSF50486">
    <property type="entry name" value="FMT C-terminal domain-like"/>
    <property type="match status" value="1"/>
</dbReference>
<dbReference type="SUPFAM" id="SSF53328">
    <property type="entry name" value="Formyltransferase"/>
    <property type="match status" value="1"/>
</dbReference>
<dbReference type="PROSITE" id="PS00373">
    <property type="entry name" value="GART"/>
    <property type="match status" value="1"/>
</dbReference>
<reference key="1">
    <citation type="submission" date="2008-05" db="EMBL/GenBank/DDBJ databases">
        <title>Complete sequence of Shigella boydii serotype 18 strain BS512.</title>
        <authorList>
            <person name="Rasko D.A."/>
            <person name="Rosovitz M."/>
            <person name="Maurelli A.T."/>
            <person name="Myers G."/>
            <person name="Seshadri R."/>
            <person name="Cer R."/>
            <person name="Jiang L."/>
            <person name="Ravel J."/>
            <person name="Sebastian Y."/>
        </authorList>
    </citation>
    <scope>NUCLEOTIDE SEQUENCE [LARGE SCALE GENOMIC DNA]</scope>
    <source>
        <strain>CDC 3083-94 / BS512</strain>
    </source>
</reference>
<evidence type="ECO:0000255" key="1">
    <source>
        <dbReference type="HAMAP-Rule" id="MF_00182"/>
    </source>
</evidence>
<gene>
    <name evidence="1" type="primary">fmt</name>
    <name type="ordered locus">SbBS512_E3672</name>
</gene>
<protein>
    <recommendedName>
        <fullName evidence="1">Methionyl-tRNA formyltransferase</fullName>
        <ecNumber evidence="1">2.1.2.9</ecNumber>
    </recommendedName>
</protein>
<proteinExistence type="inferred from homology"/>
<feature type="chain" id="PRO_1000098444" description="Methionyl-tRNA formyltransferase">
    <location>
        <begin position="1"/>
        <end position="315"/>
    </location>
</feature>
<feature type="binding site" evidence="1">
    <location>
        <begin position="113"/>
        <end position="116"/>
    </location>
    <ligand>
        <name>(6S)-5,6,7,8-tetrahydrofolate</name>
        <dbReference type="ChEBI" id="CHEBI:57453"/>
    </ligand>
</feature>
<sequence>MSESLRIIFAGTPDFAARHLDALLSSGHNVVGVFTQPDRPAGRGKKLMPSPVKVLAEEKGLPVFQPVSLRPQENQQLVADLQADVMVVVAYGLILPKAVLEMPRLGCINVHGSLLPRWRGAAPIQRSLWAGDAETGVTIMQMDVGLDTGDMLYKLSCPITAEDTSGTLYDKLAELGPQGLITTLKQLADGTAKPEVQDKTLVTYAEKLSKEEARIDWSLSAAQLERCIRAFNPWPMSWLEIERQPVKVWKASVIDTATNAAPGTILEANKQGIQVATGDGILNLLSLQPAGKKAMSAQDLLNSRREWFVPGNRLA</sequence>
<name>FMT_SHIB3</name>